<feature type="initiator methionine" description="Removed" evidence="2">
    <location>
        <position position="1"/>
    </location>
</feature>
<feature type="chain" id="PRO_0000201064" description="Ferritin light chain">
    <location>
        <begin position="2"/>
        <end position="175"/>
    </location>
</feature>
<feature type="domain" description="Ferritin-like diiron" evidence="5">
    <location>
        <begin position="7"/>
        <end position="156"/>
    </location>
</feature>
<feature type="region of interest" description="Catalytic site for iron oxidation">
    <location>
        <begin position="54"/>
        <end position="61"/>
    </location>
</feature>
<feature type="binding site" evidence="5">
    <location>
        <position position="54"/>
    </location>
    <ligand>
        <name>Fe cation</name>
        <dbReference type="ChEBI" id="CHEBI:24875"/>
    </ligand>
</feature>
<feature type="binding site" evidence="5">
    <location>
        <position position="57"/>
    </location>
    <ligand>
        <name>Fe cation</name>
        <dbReference type="ChEBI" id="CHEBI:24875"/>
    </ligand>
</feature>
<feature type="binding site" evidence="5">
    <location>
        <position position="58"/>
    </location>
    <ligand>
        <name>Fe cation</name>
        <dbReference type="ChEBI" id="CHEBI:24875"/>
    </ligand>
</feature>
<feature type="binding site" evidence="5">
    <location>
        <position position="61"/>
    </location>
    <ligand>
        <name>Fe cation</name>
        <dbReference type="ChEBI" id="CHEBI:24875"/>
    </ligand>
</feature>
<feature type="binding site" evidence="5">
    <location>
        <position position="64"/>
    </location>
    <ligand>
        <name>Fe cation</name>
        <dbReference type="ChEBI" id="CHEBI:24875"/>
    </ligand>
</feature>
<feature type="modified residue" description="N-acetylserine" evidence="2">
    <location>
        <position position="2"/>
    </location>
</feature>
<reference key="1">
    <citation type="submission" date="2004-11" db="EMBL/GenBank/DDBJ databases">
        <authorList>
            <consortium name="The German cDNA consortium"/>
        </authorList>
    </citation>
    <scope>NUCLEOTIDE SEQUENCE [LARGE SCALE MRNA]</scope>
    <source>
        <tissue>Liver</tissue>
    </source>
</reference>
<proteinExistence type="evidence at transcript level"/>
<accession>Q5R538</accession>
<sequence length="175" mass="20019">MSSQIRQNYSTDVEAAVNSLVNMYLQASYTYLSLGFYFDRDDVALEGVSHFFRELAEEKREGYERLLKMQNQRGGRALFQDIKKPAEDEWGKTPDAMKAAMALEKKLNQALLDLHALGSAHTDPHLCDFLETHFLDEEVKLIKKMGDHLTNLHRLGGPEAGLGEYLFERLTLKHD</sequence>
<name>FRIL_PONAB</name>
<gene>
    <name type="primary">FTL</name>
</gene>
<keyword id="KW-0007">Acetylation</keyword>
<keyword id="KW-0963">Cytoplasm</keyword>
<keyword id="KW-0968">Cytoplasmic vesicle</keyword>
<keyword id="KW-0408">Iron</keyword>
<keyword id="KW-0409">Iron storage</keyword>
<keyword id="KW-0458">Lysosome</keyword>
<keyword id="KW-0479">Metal-binding</keyword>
<keyword id="KW-1185">Reference proteome</keyword>
<organism>
    <name type="scientific">Pongo abelii</name>
    <name type="common">Sumatran orangutan</name>
    <name type="synonym">Pongo pygmaeus abelii</name>
    <dbReference type="NCBI Taxonomy" id="9601"/>
    <lineage>
        <taxon>Eukaryota</taxon>
        <taxon>Metazoa</taxon>
        <taxon>Chordata</taxon>
        <taxon>Craniata</taxon>
        <taxon>Vertebrata</taxon>
        <taxon>Euteleostomi</taxon>
        <taxon>Mammalia</taxon>
        <taxon>Eutheria</taxon>
        <taxon>Euarchontoglires</taxon>
        <taxon>Primates</taxon>
        <taxon>Haplorrhini</taxon>
        <taxon>Catarrhini</taxon>
        <taxon>Hominidae</taxon>
        <taxon>Pongo</taxon>
    </lineage>
</organism>
<dbReference type="EMBL" id="CR861037">
    <property type="protein sequence ID" value="CAH93128.1"/>
    <property type="molecule type" value="mRNA"/>
</dbReference>
<dbReference type="RefSeq" id="NP_001126850.1">
    <property type="nucleotide sequence ID" value="NM_001133378.1"/>
</dbReference>
<dbReference type="RefSeq" id="XP_054394417.1">
    <property type="nucleotide sequence ID" value="XM_054538442.2"/>
</dbReference>
<dbReference type="SMR" id="Q5R538"/>
<dbReference type="FunCoup" id="Q5R538">
    <property type="interactions" value="58"/>
</dbReference>
<dbReference type="STRING" id="9601.ENSPPYP00000011435"/>
<dbReference type="Ensembl" id="ENSPPYT00000011877.3">
    <property type="protein sequence ID" value="ENSPPYP00000011435.3"/>
    <property type="gene ID" value="ENSPPYG00000010223.3"/>
</dbReference>
<dbReference type="GeneID" id="100173858"/>
<dbReference type="KEGG" id="pon:100173858"/>
<dbReference type="CTD" id="2512"/>
<dbReference type="eggNOG" id="KOG2332">
    <property type="taxonomic scope" value="Eukaryota"/>
</dbReference>
<dbReference type="GeneTree" id="ENSGT00940000153096"/>
<dbReference type="InParanoid" id="Q5R538"/>
<dbReference type="OMA" id="CARADPH"/>
<dbReference type="OrthoDB" id="186462at2759"/>
<dbReference type="Proteomes" id="UP000001595">
    <property type="component" value="Chromosome 19"/>
</dbReference>
<dbReference type="GO" id="GO:0044754">
    <property type="term" value="C:autolysosome"/>
    <property type="evidence" value="ECO:0007669"/>
    <property type="project" value="UniProtKB-SubCell"/>
</dbReference>
<dbReference type="GO" id="GO:0005776">
    <property type="term" value="C:autophagosome"/>
    <property type="evidence" value="ECO:0007669"/>
    <property type="project" value="UniProtKB-SubCell"/>
</dbReference>
<dbReference type="GO" id="GO:0031410">
    <property type="term" value="C:cytoplasmic vesicle"/>
    <property type="evidence" value="ECO:0007669"/>
    <property type="project" value="UniProtKB-KW"/>
</dbReference>
<dbReference type="GO" id="GO:0070288">
    <property type="term" value="C:ferritin complex"/>
    <property type="evidence" value="ECO:0000250"/>
    <property type="project" value="UniProtKB"/>
</dbReference>
<dbReference type="GO" id="GO:0008199">
    <property type="term" value="F:ferric iron binding"/>
    <property type="evidence" value="ECO:0007669"/>
    <property type="project" value="InterPro"/>
</dbReference>
<dbReference type="GO" id="GO:0008198">
    <property type="term" value="F:ferrous iron binding"/>
    <property type="evidence" value="ECO:0007669"/>
    <property type="project" value="TreeGrafter"/>
</dbReference>
<dbReference type="GO" id="GO:0005506">
    <property type="term" value="F:iron ion binding"/>
    <property type="evidence" value="ECO:0000250"/>
    <property type="project" value="UniProtKB"/>
</dbReference>
<dbReference type="GO" id="GO:0006879">
    <property type="term" value="P:intracellular iron ion homeostasis"/>
    <property type="evidence" value="ECO:0007669"/>
    <property type="project" value="UniProtKB-KW"/>
</dbReference>
<dbReference type="GO" id="GO:0006826">
    <property type="term" value="P:iron ion transport"/>
    <property type="evidence" value="ECO:0007669"/>
    <property type="project" value="InterPro"/>
</dbReference>
<dbReference type="CDD" id="cd00904">
    <property type="entry name" value="Ferritin"/>
    <property type="match status" value="1"/>
</dbReference>
<dbReference type="FunFam" id="1.20.1260.10:FF:000009">
    <property type="entry name" value="Ferritin light chain"/>
    <property type="match status" value="1"/>
</dbReference>
<dbReference type="Gene3D" id="1.20.1260.10">
    <property type="match status" value="1"/>
</dbReference>
<dbReference type="InterPro" id="IPR001519">
    <property type="entry name" value="Ferritin"/>
</dbReference>
<dbReference type="InterPro" id="IPR012347">
    <property type="entry name" value="Ferritin-like"/>
</dbReference>
<dbReference type="InterPro" id="IPR009040">
    <property type="entry name" value="Ferritin-like_diiron"/>
</dbReference>
<dbReference type="InterPro" id="IPR009078">
    <property type="entry name" value="Ferritin-like_SF"/>
</dbReference>
<dbReference type="InterPro" id="IPR014034">
    <property type="entry name" value="Ferritin_CS"/>
</dbReference>
<dbReference type="InterPro" id="IPR008331">
    <property type="entry name" value="Ferritin_DPS_dom"/>
</dbReference>
<dbReference type="PANTHER" id="PTHR11431">
    <property type="entry name" value="FERRITIN"/>
    <property type="match status" value="1"/>
</dbReference>
<dbReference type="PANTHER" id="PTHR11431:SF47">
    <property type="entry name" value="FERRITIN LIGHT CHAIN"/>
    <property type="match status" value="1"/>
</dbReference>
<dbReference type="Pfam" id="PF00210">
    <property type="entry name" value="Ferritin"/>
    <property type="match status" value="1"/>
</dbReference>
<dbReference type="SUPFAM" id="SSF47240">
    <property type="entry name" value="Ferritin-like"/>
    <property type="match status" value="1"/>
</dbReference>
<dbReference type="PROSITE" id="PS00540">
    <property type="entry name" value="FERRITIN_1"/>
    <property type="match status" value="1"/>
</dbReference>
<dbReference type="PROSITE" id="PS00204">
    <property type="entry name" value="FERRITIN_2"/>
    <property type="match status" value="1"/>
</dbReference>
<dbReference type="PROSITE" id="PS50905">
    <property type="entry name" value="FERRITIN_LIKE"/>
    <property type="match status" value="1"/>
</dbReference>
<protein>
    <recommendedName>
        <fullName>Ferritin light chain</fullName>
        <shortName>Ferritin L subunit</shortName>
    </recommendedName>
</protein>
<evidence type="ECO:0000250" key="1"/>
<evidence type="ECO:0000250" key="2">
    <source>
        <dbReference type="UniProtKB" id="P02791"/>
    </source>
</evidence>
<evidence type="ECO:0000250" key="3">
    <source>
        <dbReference type="UniProtKB" id="P02792"/>
    </source>
</evidence>
<evidence type="ECO:0000250" key="4">
    <source>
        <dbReference type="UniProtKB" id="P29391"/>
    </source>
</evidence>
<evidence type="ECO:0000255" key="5">
    <source>
        <dbReference type="PROSITE-ProRule" id="PRU00085"/>
    </source>
</evidence>
<evidence type="ECO:0000305" key="6"/>
<comment type="function">
    <text evidence="1 3">Stores iron in a soluble, non-toxic, readily available form. Important for iron homeostasis. Iron is taken up in the ferrous form and deposited as ferric hydroxides after oxidation. Also plays a role in delivery of iron to cells. Mediates iron uptake in capsule cells of the developing kidney (By similarity). Delivery to lysosomes by the cargo receptor NCOA4 for autophagic degradation and release or iron (By similarity).</text>
</comment>
<comment type="subunit">
    <text evidence="3">Oligomer of 24 subunits. There are two types of subunits: L (light) chain and H (heavy) chain. The major chain can be light or heavy, depending on the species and tissue type. The functional molecule forms a roughly spherical shell with a diameter of 12 nm and contains a central cavity into which the insoluble mineral iron core is deposited. Interacts with NCOA4 (By similarity).</text>
</comment>
<comment type="subcellular location">
    <subcellularLocation>
        <location evidence="3">Cytoplasmic vesicle</location>
        <location evidence="3">Autophagosome</location>
    </subcellularLocation>
    <subcellularLocation>
        <location evidence="4">Cytoplasm</location>
    </subcellularLocation>
    <subcellularLocation>
        <location evidence="4">Autolysosome</location>
    </subcellularLocation>
</comment>
<comment type="similarity">
    <text evidence="6">Belongs to the ferritin family.</text>
</comment>